<organism>
    <name type="scientific">Ramazzottius varieornatus</name>
    <name type="common">Water bear</name>
    <name type="synonym">Tardigrade</name>
    <dbReference type="NCBI Taxonomy" id="947166"/>
    <lineage>
        <taxon>Eukaryota</taxon>
        <taxon>Metazoa</taxon>
        <taxon>Ecdysozoa</taxon>
        <taxon>Tardigrada</taxon>
        <taxon>Eutardigrada</taxon>
        <taxon>Parachela</taxon>
        <taxon>Hypsibioidea</taxon>
        <taxon>Ramazzottiidae</taxon>
        <taxon>Ramazzottius</taxon>
    </lineage>
</organism>
<protein>
    <recommendedName>
        <fullName evidence="4">Damage suppressor protein</fullName>
    </recommendedName>
</protein>
<comment type="function">
    <text evidence="2 3">Unique chromatin-associating protein that contributes to the organism's exceptional tolerance to harsh environmental stresses (PubMed:27649274, PubMed:31571581). Binds with a higher affinity to nucleosomes than to free DNA (PubMed:31571581). Protects chromatin from damage caused by hydroxyl radical-mediated cleavage induced by X-rays or treatment with hydrogen peroxide (PubMed:27649274, PubMed:31571581). Suppresses X-ray-induced DNA damage that includes single-strand breaks (SSBs) as well as more hazardous double-strand breaks (DSBs), and improves radiotolerance (PubMed:27649274). Also shields DNA against reactive oxygen species (ROS) (PubMed:27649274).</text>
</comment>
<comment type="subcellular location">
    <subcellularLocation>
        <location evidence="2">Nucleus</location>
    </subcellularLocation>
</comment>
<comment type="online information" name="Protein Spotlight">
    <link uri="https://www.proteinspotlight.org/back_issues/188/"/>
    <text>A walk on the rough side - Issue 188 of February 2017</text>
</comment>
<reference key="1">
    <citation type="journal article" date="2016" name="Nat. Commun.">
        <title>Extremotolerant tardigrade genome and improved radiotolerance of human cultured cells by tardigrade-unique protein.</title>
        <authorList>
            <person name="Hashimoto T."/>
            <person name="Horikawa D.D."/>
            <person name="Saito Y."/>
            <person name="Kuwahara H."/>
            <person name="Kozuka-Hata H."/>
            <person name="Shin-I T."/>
            <person name="Minakuchi Y."/>
            <person name="Ohishi K."/>
            <person name="Motoyama A."/>
            <person name="Aizu T."/>
            <person name="Enomoto A."/>
            <person name="Kondo K."/>
            <person name="Tanaka S."/>
            <person name="Hara Y."/>
            <person name="Koshikawa S."/>
            <person name="Sagara H."/>
            <person name="Miura T."/>
            <person name="Yokobori S."/>
            <person name="Miyagawa K."/>
            <person name="Suzuki Y."/>
            <person name="Kubo T."/>
            <person name="Oyama M."/>
            <person name="Kohara Y."/>
            <person name="Fujiyama A."/>
            <person name="Arakawa K."/>
            <person name="Katayama T."/>
            <person name="Toyoda A."/>
            <person name="Kunieda T."/>
        </authorList>
    </citation>
    <scope>NUCLEOTIDE SEQUENCE [LARGE SCALE GENOMIC DNA / MRNA]</scope>
    <scope>IDENTIFICATION BY MASS SPECTROMETRY</scope>
    <scope>SUBCELLULAR LOCATION</scope>
    <scope>DNA-BINDING</scope>
    <scope>FUNCTION</scope>
    <source>
        <strain>YOKOZUNA-1</strain>
    </source>
</reference>
<reference key="2">
    <citation type="journal article" date="2019" name="Elife">
        <title>The tardigrade damage suppressor protein binds to nucleosomes and protects DNA from hydroxyl radicals.</title>
        <authorList>
            <person name="Chavez C."/>
            <person name="Cruz-Becerra G."/>
            <person name="Fei J."/>
            <person name="Kassavetis G.A."/>
            <person name="Kadonaga J.T."/>
        </authorList>
    </citation>
    <scope>FUNCTION</scope>
    <scope>REGION</scope>
    <scope>MUTAGENESIS OF 360-GLU--LYS-445 AND 363-ARG--ARG-367</scope>
</reference>
<keyword id="KW-0227">DNA damage</keyword>
<keyword id="KW-0238">DNA-binding</keyword>
<keyword id="KW-0539">Nucleus</keyword>
<keyword id="KW-1185">Reference proteome</keyword>
<evidence type="ECO:0000256" key="1">
    <source>
        <dbReference type="SAM" id="MobiDB-lite"/>
    </source>
</evidence>
<evidence type="ECO:0000269" key="2">
    <source>
    </source>
</evidence>
<evidence type="ECO:0000269" key="3">
    <source>
    </source>
</evidence>
<evidence type="ECO:0000303" key="4">
    <source>
    </source>
</evidence>
<sequence length="445" mass="42848">MASTHQSSTEPSSTGKSEETKKDASQGSGQDSKNVTVTKGTGSSATSAAIVKTGGSQGKDSSTTAGSSSTQGQKFSTTPTDPKTFSSDQKEKSKSPAKEVPSGGDSKSQGDTKSQSDAKSSGQSQGQSKDSGKSSSDSSKSHSVIGAVKDVVAGAKDVAGKAVEDAPSIMHTAVDAVKNAATTVKDVASSAASTVAEKVVDAYHSVVGDKTDDKKEGEHSGDKKDDSKAGSGSGQGGDNKKSEGETSGQAESSSGNEGAAPAKGRGRGRPPAAAKGVAKGAAKGAAASKGAKSGAESSKGGEQSSGDIEMADASSKGGSDQRDSAATVGEGGASGSEGGAKKGRGRGAGKKADAGDTSAEPPRRSSRLTSSGTGAGSAPAAAKGGAKRAASSSSTPSNAKKQATGGAGKAAATKATAAKSAASKAPQNGAGAKKKGGKAGGRKRK</sequence>
<proteinExistence type="evidence at protein level"/>
<gene>
    <name evidence="4" type="primary">Dsup</name>
    <name evidence="4" type="ORF">RvY_17224</name>
</gene>
<name>DSUP_RAMVA</name>
<accession>P0DOW4</accession>
<accession>A0A1D1W292</accession>
<feature type="chain" id="PRO_0000438665" description="Damage suppressor protein">
    <location>
        <begin position="1"/>
        <end position="445"/>
    </location>
</feature>
<feature type="region of interest" description="Disordered" evidence="1">
    <location>
        <begin position="1"/>
        <end position="145"/>
    </location>
</feature>
<feature type="region of interest" description="Disordered" evidence="1">
    <location>
        <begin position="203"/>
        <end position="445"/>
    </location>
</feature>
<feature type="region of interest" description="Required and sufficient for DNA-binding and co-localization with nuclear DNA" evidence="2">
    <location>
        <begin position="208"/>
        <end position="445"/>
    </location>
</feature>
<feature type="region of interest" description="Required for nucleosome binding and for the protection of chromatin from hydroxyl radical-mediated DNA damage" evidence="3">
    <location>
        <begin position="360"/>
        <end position="445"/>
    </location>
</feature>
<feature type="compositionally biased region" description="Polar residues" evidence="1">
    <location>
        <begin position="1"/>
        <end position="15"/>
    </location>
</feature>
<feature type="compositionally biased region" description="Polar residues" evidence="1">
    <location>
        <begin position="25"/>
        <end position="47"/>
    </location>
</feature>
<feature type="compositionally biased region" description="Low complexity" evidence="1">
    <location>
        <begin position="61"/>
        <end position="73"/>
    </location>
</feature>
<feature type="compositionally biased region" description="Polar residues" evidence="1">
    <location>
        <begin position="74"/>
        <end position="87"/>
    </location>
</feature>
<feature type="compositionally biased region" description="Basic and acidic residues" evidence="1">
    <location>
        <begin position="88"/>
        <end position="97"/>
    </location>
</feature>
<feature type="compositionally biased region" description="Low complexity" evidence="1">
    <location>
        <begin position="117"/>
        <end position="138"/>
    </location>
</feature>
<feature type="compositionally biased region" description="Basic and acidic residues" evidence="1">
    <location>
        <begin position="207"/>
        <end position="228"/>
    </location>
</feature>
<feature type="compositionally biased region" description="Polar residues" evidence="1">
    <location>
        <begin position="245"/>
        <end position="256"/>
    </location>
</feature>
<feature type="compositionally biased region" description="Low complexity" evidence="1">
    <location>
        <begin position="257"/>
        <end position="306"/>
    </location>
</feature>
<feature type="compositionally biased region" description="Gly residues" evidence="1">
    <location>
        <begin position="329"/>
        <end position="338"/>
    </location>
</feature>
<feature type="compositionally biased region" description="Low complexity" evidence="1">
    <location>
        <begin position="367"/>
        <end position="431"/>
    </location>
</feature>
<feature type="compositionally biased region" description="Basic residues" evidence="1">
    <location>
        <begin position="432"/>
        <end position="445"/>
    </location>
</feature>
<feature type="mutagenesis site" description="In M1; loss of binding to nucleosomes and reduced ability to protect chromatin from hydroxyl radical-mediated DNA damage." evidence="3">
    <location>
        <begin position="360"/>
        <end position="445"/>
    </location>
</feature>
<feature type="mutagenesis site" description="In M2; decreased binding to nucleosomes and reduced ability to protect chromatin from hydroxyl radical-mediated DNA damage." evidence="3">
    <original>RRSSR</original>
    <variation>EESSE</variation>
    <location>
        <begin position="363"/>
        <end position="367"/>
    </location>
</feature>
<dbReference type="EMBL" id="LC050827">
    <property type="protein sequence ID" value="BAV59442.1"/>
    <property type="molecule type" value="mRNA"/>
</dbReference>
<dbReference type="EMBL" id="BDGG01000015">
    <property type="protein sequence ID" value="GAV07386.1"/>
    <property type="molecule type" value="Genomic_DNA"/>
</dbReference>
<dbReference type="Proteomes" id="UP000186922">
    <property type="component" value="Unassembled WGS sequence"/>
</dbReference>
<dbReference type="GO" id="GO:0005634">
    <property type="term" value="C:nucleus"/>
    <property type="evidence" value="ECO:0007669"/>
    <property type="project" value="UniProtKB-SubCell"/>
</dbReference>
<dbReference type="GO" id="GO:0003677">
    <property type="term" value="F:DNA binding"/>
    <property type="evidence" value="ECO:0007669"/>
    <property type="project" value="UniProtKB-KW"/>
</dbReference>
<dbReference type="GO" id="GO:0006974">
    <property type="term" value="P:DNA damage response"/>
    <property type="evidence" value="ECO:0007669"/>
    <property type="project" value="UniProtKB-KW"/>
</dbReference>